<evidence type="ECO:0000250" key="1">
    <source>
        <dbReference type="UniProtKB" id="Q53EU6"/>
    </source>
</evidence>
<evidence type="ECO:0000250" key="2">
    <source>
        <dbReference type="UniProtKB" id="Q9D517"/>
    </source>
</evidence>
<evidence type="ECO:0000255" key="3"/>
<evidence type="ECO:0000305" key="4"/>
<comment type="function">
    <text evidence="1">Converts glycerol-3-phosphate to 1-acyl-sn-glycerol-3-phosphate (lysophosphatidic acid or LPA) by incorporating an acyl moiety at the sn-1 position of the glycerol backbone. Also converts LPA into 1,2-diacyl-sn-glycerol-3-phosphate (phosphatidic acid or PA) by incorporating an acyl moiety at the sn-2 position of the glycerol backbone. Protects cells against lipotoxicity.</text>
</comment>
<comment type="catalytic activity">
    <reaction evidence="1">
        <text>sn-glycerol 3-phosphate + an acyl-CoA = a 1-acyl-sn-glycero-3-phosphate + CoA</text>
        <dbReference type="Rhea" id="RHEA:15325"/>
        <dbReference type="ChEBI" id="CHEBI:57287"/>
        <dbReference type="ChEBI" id="CHEBI:57597"/>
        <dbReference type="ChEBI" id="CHEBI:57970"/>
        <dbReference type="ChEBI" id="CHEBI:58342"/>
        <dbReference type="EC" id="2.3.1.15"/>
    </reaction>
    <physiologicalReaction direction="left-to-right" evidence="1">
        <dbReference type="Rhea" id="RHEA:15326"/>
    </physiologicalReaction>
</comment>
<comment type="catalytic activity">
    <reaction evidence="1">
        <text>a 1-acyl-sn-glycero-3-phosphate + an acyl-CoA = a 1,2-diacyl-sn-glycero-3-phosphate + CoA</text>
        <dbReference type="Rhea" id="RHEA:19709"/>
        <dbReference type="ChEBI" id="CHEBI:57287"/>
        <dbReference type="ChEBI" id="CHEBI:57970"/>
        <dbReference type="ChEBI" id="CHEBI:58342"/>
        <dbReference type="ChEBI" id="CHEBI:58608"/>
        <dbReference type="EC" id="2.3.1.51"/>
    </reaction>
    <physiologicalReaction direction="left-to-right" evidence="1">
        <dbReference type="Rhea" id="RHEA:19710"/>
    </physiologicalReaction>
</comment>
<comment type="catalytic activity">
    <reaction evidence="1">
        <text>dodecanoyl-CoA + sn-glycerol 3-phosphate = 1-dodecanoyl-sn-glycerol 3-phosphate + CoA</text>
        <dbReference type="Rhea" id="RHEA:35727"/>
        <dbReference type="ChEBI" id="CHEBI:57287"/>
        <dbReference type="ChEBI" id="CHEBI:57375"/>
        <dbReference type="ChEBI" id="CHEBI:57597"/>
        <dbReference type="ChEBI" id="CHEBI:72682"/>
    </reaction>
    <physiologicalReaction direction="left-to-right" evidence="1">
        <dbReference type="Rhea" id="RHEA:35728"/>
    </physiologicalReaction>
</comment>
<comment type="catalytic activity">
    <reaction evidence="1">
        <text>sn-glycerol 3-phosphate + hexadecanoyl-CoA = 1-hexadecanoyl-sn-glycero-3-phosphate + CoA</text>
        <dbReference type="Rhea" id="RHEA:35723"/>
        <dbReference type="ChEBI" id="CHEBI:57287"/>
        <dbReference type="ChEBI" id="CHEBI:57379"/>
        <dbReference type="ChEBI" id="CHEBI:57518"/>
        <dbReference type="ChEBI" id="CHEBI:57597"/>
    </reaction>
    <physiologicalReaction direction="left-to-right" evidence="1">
        <dbReference type="Rhea" id="RHEA:35724"/>
    </physiologicalReaction>
</comment>
<comment type="catalytic activity">
    <reaction evidence="1">
        <text>sn-glycerol 3-phosphate + (9Z)-octadecenoyl-CoA = 1-(9Z-octadecenoyl)-sn-glycero-3-phosphate + CoA</text>
        <dbReference type="Rhea" id="RHEA:37199"/>
        <dbReference type="ChEBI" id="CHEBI:57287"/>
        <dbReference type="ChEBI" id="CHEBI:57387"/>
        <dbReference type="ChEBI" id="CHEBI:57597"/>
        <dbReference type="ChEBI" id="CHEBI:74544"/>
    </reaction>
    <physiologicalReaction direction="left-to-right" evidence="1">
        <dbReference type="Rhea" id="RHEA:37200"/>
    </physiologicalReaction>
</comment>
<comment type="catalytic activity">
    <reaction evidence="1">
        <text>(9Z,12Z)-octadecadienoyl-CoA + sn-glycerol 3-phosphate = 1-(9Z,12Z)-octadecadienoyl-sn-glycero-3-phosphate + CoA</text>
        <dbReference type="Rhea" id="RHEA:37203"/>
        <dbReference type="ChEBI" id="CHEBI:57287"/>
        <dbReference type="ChEBI" id="CHEBI:57383"/>
        <dbReference type="ChEBI" id="CHEBI:57597"/>
        <dbReference type="ChEBI" id="CHEBI:74547"/>
    </reaction>
    <physiologicalReaction direction="left-to-right" evidence="1">
        <dbReference type="Rhea" id="RHEA:37204"/>
    </physiologicalReaction>
</comment>
<comment type="catalytic activity">
    <reaction evidence="1">
        <text>1-tetradecanoyl-sn-glycerol 3-phosphate + (9Z)-octadecenoyl-CoA = 1-tetradecanoyl-2-(9Z)-octadecenoyl-sn-glycero-3-phosphate + CoA</text>
        <dbReference type="Rhea" id="RHEA:37187"/>
        <dbReference type="ChEBI" id="CHEBI:57287"/>
        <dbReference type="ChEBI" id="CHEBI:57387"/>
        <dbReference type="ChEBI" id="CHEBI:72683"/>
        <dbReference type="ChEBI" id="CHEBI:74586"/>
    </reaction>
    <physiologicalReaction direction="left-to-right" evidence="1">
        <dbReference type="Rhea" id="RHEA:37188"/>
    </physiologicalReaction>
</comment>
<comment type="catalytic activity">
    <reaction evidence="1">
        <text>1-hexadecanoyl-sn-glycero-3-phosphate + (9Z)-octadecenoyl-CoA = 1-hexadecanoyl-2-(9Z-octadecenoyl)-sn-glycero-3-phosphate + CoA</text>
        <dbReference type="Rhea" id="RHEA:33187"/>
        <dbReference type="ChEBI" id="CHEBI:57287"/>
        <dbReference type="ChEBI" id="CHEBI:57387"/>
        <dbReference type="ChEBI" id="CHEBI:57518"/>
        <dbReference type="ChEBI" id="CHEBI:64839"/>
    </reaction>
    <physiologicalReaction direction="left-to-right" evidence="1">
        <dbReference type="Rhea" id="RHEA:33188"/>
    </physiologicalReaction>
</comment>
<comment type="catalytic activity">
    <reaction evidence="1">
        <text>1-(9Z-octadecenoyl)-sn-glycero-3-phosphate + (9Z)-octadecenoyl-CoA = 1,2-di-(9Z-octadecenoyl)-sn-glycero-3-phosphate + CoA</text>
        <dbReference type="Rhea" id="RHEA:37131"/>
        <dbReference type="ChEBI" id="CHEBI:57287"/>
        <dbReference type="ChEBI" id="CHEBI:57387"/>
        <dbReference type="ChEBI" id="CHEBI:74544"/>
        <dbReference type="ChEBI" id="CHEBI:74546"/>
    </reaction>
    <physiologicalReaction direction="left-to-right" evidence="1">
        <dbReference type="Rhea" id="RHEA:37132"/>
    </physiologicalReaction>
</comment>
<comment type="catalytic activity">
    <reaction evidence="1">
        <text>1-(6Z,9Z,12Z-octadecatrienoyl)-sn-glycero-3-phosphate + (9Z)-octadecenoyl-CoA = (6Z,9Z,12Z)-octadecatrienoyl-2-(9Z)-octadecenoyl-sn-glycero-3-phosphate + CoA</text>
        <dbReference type="Rhea" id="RHEA:37179"/>
        <dbReference type="ChEBI" id="CHEBI:57287"/>
        <dbReference type="ChEBI" id="CHEBI:57387"/>
        <dbReference type="ChEBI" id="CHEBI:74581"/>
        <dbReference type="ChEBI" id="CHEBI:74582"/>
    </reaction>
    <physiologicalReaction direction="left-to-right" evidence="1">
        <dbReference type="Rhea" id="RHEA:37180"/>
    </physiologicalReaction>
</comment>
<comment type="catalytic activity">
    <reaction evidence="1">
        <text>1-(9Z,12Z,15Z)-octadecatrienoyl-sn-glycero-3-phosphate + (9Z)-octadecenoyl-CoA = 1-(9Z,12Z,15Z)-octadecatrienoyl-2-(9Z)-octadecenoyl-sn-glycero-3-phosphate + CoA</text>
        <dbReference type="Rhea" id="RHEA:37139"/>
        <dbReference type="ChEBI" id="CHEBI:57287"/>
        <dbReference type="ChEBI" id="CHEBI:57387"/>
        <dbReference type="ChEBI" id="CHEBI:74549"/>
        <dbReference type="ChEBI" id="CHEBI:74550"/>
    </reaction>
    <physiologicalReaction direction="left-to-right" evidence="1">
        <dbReference type="Rhea" id="RHEA:37140"/>
    </physiologicalReaction>
</comment>
<comment type="catalytic activity">
    <reaction evidence="1">
        <text>1-(9Z-octadecenoyl)-sn-glycero-3-phosphate + tetradecanoyl-CoA = 1-(9Z)-octadecenoyl-2-tetradecanoyl-sn-glycero-3-phosphate + CoA</text>
        <dbReference type="Rhea" id="RHEA:37171"/>
        <dbReference type="ChEBI" id="CHEBI:57287"/>
        <dbReference type="ChEBI" id="CHEBI:57385"/>
        <dbReference type="ChEBI" id="CHEBI:74544"/>
        <dbReference type="ChEBI" id="CHEBI:74579"/>
    </reaction>
    <physiologicalReaction direction="left-to-right" evidence="1">
        <dbReference type="Rhea" id="RHEA:37172"/>
    </physiologicalReaction>
</comment>
<comment type="catalytic activity">
    <reaction evidence="1">
        <text>1-(9Z-octadecenoyl)-sn-glycero-3-phosphate + hexadecanoyl-CoA = 1-(9Z)-octadecenoyl-2-hexadecanoyl-sn-glycero-3-phosphate + CoA</text>
        <dbReference type="Rhea" id="RHEA:37143"/>
        <dbReference type="ChEBI" id="CHEBI:57287"/>
        <dbReference type="ChEBI" id="CHEBI:57379"/>
        <dbReference type="ChEBI" id="CHEBI:74544"/>
        <dbReference type="ChEBI" id="CHEBI:74551"/>
    </reaction>
    <physiologicalReaction direction="left-to-right" evidence="1">
        <dbReference type="Rhea" id="RHEA:37144"/>
    </physiologicalReaction>
</comment>
<comment type="catalytic activity">
    <reaction evidence="1">
        <text>1-(9Z-octadecenoyl)-sn-glycero-3-phosphate + octadecanoyl-CoA = 1-(9Z-octadecenoyl)-2-octadecanoyl-sn-glycero-3-phosphate + CoA</text>
        <dbReference type="Rhea" id="RHEA:37147"/>
        <dbReference type="ChEBI" id="CHEBI:57287"/>
        <dbReference type="ChEBI" id="CHEBI:57394"/>
        <dbReference type="ChEBI" id="CHEBI:74544"/>
        <dbReference type="ChEBI" id="CHEBI:74552"/>
    </reaction>
    <physiologicalReaction direction="left-to-right" evidence="1">
        <dbReference type="Rhea" id="RHEA:37148"/>
    </physiologicalReaction>
</comment>
<comment type="catalytic activity">
    <reaction evidence="1">
        <text>1-(9Z-octadecenoyl)-sn-glycero-3-phosphate + (9Z,12Z)-octadecadienoyl-CoA = 1-(9Z)-octadecenoyl-2-(9Z,12Z)-octadecadienoyl-sn-glycero-3-phosphate + CoA</text>
        <dbReference type="Rhea" id="RHEA:37159"/>
        <dbReference type="ChEBI" id="CHEBI:57287"/>
        <dbReference type="ChEBI" id="CHEBI:57383"/>
        <dbReference type="ChEBI" id="CHEBI:74544"/>
        <dbReference type="ChEBI" id="CHEBI:74563"/>
    </reaction>
    <physiologicalReaction direction="left-to-right" evidence="1">
        <dbReference type="Rhea" id="RHEA:37160"/>
    </physiologicalReaction>
</comment>
<comment type="catalytic activity">
    <reaction evidence="1">
        <text>1-(5Z,8Z,11Z,14Z-eicosatetraenoyl)-sn-glycero-3-phosphate + (9Z)-octadecenoyl-CoA = 1-(5Z,8Z,11Z,14Z)-eicosatetraenoyl-2-(9Z)-octadecenoyl-sn-glycero-3-phosphate + CoA</text>
        <dbReference type="Rhea" id="RHEA:37455"/>
        <dbReference type="ChEBI" id="CHEBI:57287"/>
        <dbReference type="ChEBI" id="CHEBI:57387"/>
        <dbReference type="ChEBI" id="CHEBI:74938"/>
        <dbReference type="ChEBI" id="CHEBI:74941"/>
    </reaction>
    <physiologicalReaction direction="left-to-right" evidence="1">
        <dbReference type="Rhea" id="RHEA:37456"/>
    </physiologicalReaction>
</comment>
<comment type="pathway">
    <text>Glycerolipid metabolism; triacylglycerol biosynthesis.</text>
</comment>
<comment type="pathway">
    <text>Phospholipid metabolism; CDP-diacylglycerol biosynthesis; CDP-diacylglycerol from sn-glycerol 3-phosphate: step 1/3.</text>
</comment>
<comment type="subcellular location">
    <subcellularLocation>
        <location evidence="1">Endoplasmic reticulum membrane</location>
        <topology evidence="3">Multi-pass membrane protein</topology>
    </subcellularLocation>
</comment>
<comment type="domain">
    <text evidence="2">The HXXXXD motif is essential for acyltransferase activity and may constitute the binding site for the phosphate moiety of the glycerol-3-phosphate.</text>
</comment>
<comment type="similarity">
    <text evidence="4">Belongs to the 1-acyl-sn-glycerol-3-phosphate acyltransferase family.</text>
</comment>
<comment type="sequence caution" evidence="4">
    <conflict type="erroneous initiation">
        <sequence resource="EMBL-CDS" id="CAK05016"/>
    </conflict>
</comment>
<dbReference type="EC" id="2.3.1.15" evidence="1"/>
<dbReference type="EC" id="2.3.1.51" evidence="1"/>
<dbReference type="EMBL" id="BX649525">
    <property type="protein sequence ID" value="CAK05016.1"/>
    <property type="status" value="ALT_INIT"/>
    <property type="molecule type" value="Genomic_DNA"/>
</dbReference>
<dbReference type="EMBL" id="BC076515">
    <property type="protein sequence ID" value="AAH76515.1"/>
    <property type="molecule type" value="mRNA"/>
</dbReference>
<dbReference type="RefSeq" id="NP_001002685.1">
    <property type="nucleotide sequence ID" value="NM_001002685.1"/>
</dbReference>
<dbReference type="FunCoup" id="Q6DG38">
    <property type="interactions" value="1508"/>
</dbReference>
<dbReference type="STRING" id="7955.ENSDARP00000115935"/>
<dbReference type="PaxDb" id="7955-ENSDARP00000115935"/>
<dbReference type="Ensembl" id="ENSDART00000188744">
    <property type="protein sequence ID" value="ENSDARP00000155218"/>
    <property type="gene ID" value="ENSDARG00000016048"/>
</dbReference>
<dbReference type="Ensembl" id="ENSDART00000192141">
    <property type="protein sequence ID" value="ENSDARP00000145361"/>
    <property type="gene ID" value="ENSDARG00000116985"/>
</dbReference>
<dbReference type="GeneID" id="436958"/>
<dbReference type="KEGG" id="dre:436958"/>
<dbReference type="AGR" id="ZFIN:ZDB-GENE-040718-436"/>
<dbReference type="CTD" id="84803"/>
<dbReference type="ZFIN" id="ZDB-GENE-040718-436">
    <property type="gene designation" value="gpat3"/>
</dbReference>
<dbReference type="eggNOG" id="KOG2898">
    <property type="taxonomic scope" value="Eukaryota"/>
</dbReference>
<dbReference type="InParanoid" id="Q6DG38"/>
<dbReference type="OMA" id="VWMFVVV"/>
<dbReference type="OrthoDB" id="10051137at2759"/>
<dbReference type="PhylomeDB" id="Q6DG38"/>
<dbReference type="TreeFam" id="TF315039"/>
<dbReference type="Reactome" id="R-DRE-1483166">
    <property type="pathway name" value="Synthesis of PA"/>
</dbReference>
<dbReference type="UniPathway" id="UPA00282"/>
<dbReference type="UniPathway" id="UPA00557">
    <property type="reaction ID" value="UER00612"/>
</dbReference>
<dbReference type="PRO" id="PR:Q6DG38"/>
<dbReference type="Proteomes" id="UP000000437">
    <property type="component" value="Alternate scaffold 21"/>
</dbReference>
<dbReference type="Proteomes" id="UP000000437">
    <property type="component" value="Chromosome 21"/>
</dbReference>
<dbReference type="Bgee" id="ENSDARG00000016048">
    <property type="expression patterns" value="Expressed in liver and 20 other cell types or tissues"/>
</dbReference>
<dbReference type="ExpressionAtlas" id="Q6DG38">
    <property type="expression patterns" value="baseline"/>
</dbReference>
<dbReference type="GO" id="GO:0005783">
    <property type="term" value="C:endoplasmic reticulum"/>
    <property type="evidence" value="ECO:0000250"/>
    <property type="project" value="UniProtKB"/>
</dbReference>
<dbReference type="GO" id="GO:0005789">
    <property type="term" value="C:endoplasmic reticulum membrane"/>
    <property type="evidence" value="ECO:0000250"/>
    <property type="project" value="UniProtKB"/>
</dbReference>
<dbReference type="GO" id="GO:0003841">
    <property type="term" value="F:1-acylglycerol-3-phosphate O-acyltransferase activity"/>
    <property type="evidence" value="ECO:0000250"/>
    <property type="project" value="UniProtKB"/>
</dbReference>
<dbReference type="GO" id="GO:0004366">
    <property type="term" value="F:glycerol-3-phosphate O-acyltransferase activity"/>
    <property type="evidence" value="ECO:0000250"/>
    <property type="project" value="UniProtKB"/>
</dbReference>
<dbReference type="GO" id="GO:0016024">
    <property type="term" value="P:CDP-diacylglycerol biosynthetic process"/>
    <property type="evidence" value="ECO:0007669"/>
    <property type="project" value="UniProtKB-UniPathway"/>
</dbReference>
<dbReference type="GO" id="GO:0019432">
    <property type="term" value="P:triglyceride biosynthetic process"/>
    <property type="evidence" value="ECO:0000250"/>
    <property type="project" value="UniProtKB"/>
</dbReference>
<dbReference type="CDD" id="cd07991">
    <property type="entry name" value="LPLAT_LPCAT1-like"/>
    <property type="match status" value="1"/>
</dbReference>
<dbReference type="InterPro" id="IPR045252">
    <property type="entry name" value="LPCAT1-like"/>
</dbReference>
<dbReference type="InterPro" id="IPR002123">
    <property type="entry name" value="Plipid/glycerol_acylTrfase"/>
</dbReference>
<dbReference type="PANTHER" id="PTHR23063:SF10">
    <property type="entry name" value="GLYCEROL-3-PHOSPHATE ACYLTRANSFERASE 3"/>
    <property type="match status" value="1"/>
</dbReference>
<dbReference type="PANTHER" id="PTHR23063">
    <property type="entry name" value="PHOSPHOLIPID ACYLTRANSFERASE"/>
    <property type="match status" value="1"/>
</dbReference>
<dbReference type="Pfam" id="PF01553">
    <property type="entry name" value="Acyltransferase"/>
    <property type="match status" value="1"/>
</dbReference>
<dbReference type="SMART" id="SM00563">
    <property type="entry name" value="PlsC"/>
    <property type="match status" value="1"/>
</dbReference>
<dbReference type="SUPFAM" id="SSF69593">
    <property type="entry name" value="Glycerol-3-phosphate (1)-acyltransferase"/>
    <property type="match status" value="1"/>
</dbReference>
<keyword id="KW-0012">Acyltransferase</keyword>
<keyword id="KW-0256">Endoplasmic reticulum</keyword>
<keyword id="KW-0444">Lipid biosynthesis</keyword>
<keyword id="KW-0443">Lipid metabolism</keyword>
<keyword id="KW-0472">Membrane</keyword>
<keyword id="KW-0594">Phospholipid biosynthesis</keyword>
<keyword id="KW-1208">Phospholipid metabolism</keyword>
<keyword id="KW-1185">Reference proteome</keyword>
<keyword id="KW-0808">Transferase</keyword>
<keyword id="KW-0812">Transmembrane</keyword>
<keyword id="KW-1133">Transmembrane helix</keyword>
<proteinExistence type="evidence at transcript level"/>
<gene>
    <name evidence="1" type="primary">gpat3</name>
    <name type="synonym">agpat9</name>
    <name type="ORF">si:ch211-85e10.5</name>
    <name type="ORF">zgc:91857</name>
</gene>
<organism>
    <name type="scientific">Danio rerio</name>
    <name type="common">Zebrafish</name>
    <name type="synonym">Brachydanio rerio</name>
    <dbReference type="NCBI Taxonomy" id="7955"/>
    <lineage>
        <taxon>Eukaryota</taxon>
        <taxon>Metazoa</taxon>
        <taxon>Chordata</taxon>
        <taxon>Craniata</taxon>
        <taxon>Vertebrata</taxon>
        <taxon>Euteleostomi</taxon>
        <taxon>Actinopterygii</taxon>
        <taxon>Neopterygii</taxon>
        <taxon>Teleostei</taxon>
        <taxon>Ostariophysi</taxon>
        <taxon>Cypriniformes</taxon>
        <taxon>Danionidae</taxon>
        <taxon>Danioninae</taxon>
        <taxon>Danio</taxon>
    </lineage>
</organism>
<reference key="1">
    <citation type="journal article" date="2013" name="Nature">
        <title>The zebrafish reference genome sequence and its relationship to the human genome.</title>
        <authorList>
            <person name="Howe K."/>
            <person name="Clark M.D."/>
            <person name="Torroja C.F."/>
            <person name="Torrance J."/>
            <person name="Berthelot C."/>
            <person name="Muffato M."/>
            <person name="Collins J.E."/>
            <person name="Humphray S."/>
            <person name="McLaren K."/>
            <person name="Matthews L."/>
            <person name="McLaren S."/>
            <person name="Sealy I."/>
            <person name="Caccamo M."/>
            <person name="Churcher C."/>
            <person name="Scott C."/>
            <person name="Barrett J.C."/>
            <person name="Koch R."/>
            <person name="Rauch G.J."/>
            <person name="White S."/>
            <person name="Chow W."/>
            <person name="Kilian B."/>
            <person name="Quintais L.T."/>
            <person name="Guerra-Assuncao J.A."/>
            <person name="Zhou Y."/>
            <person name="Gu Y."/>
            <person name="Yen J."/>
            <person name="Vogel J.H."/>
            <person name="Eyre T."/>
            <person name="Redmond S."/>
            <person name="Banerjee R."/>
            <person name="Chi J."/>
            <person name="Fu B."/>
            <person name="Langley E."/>
            <person name="Maguire S.F."/>
            <person name="Laird G.K."/>
            <person name="Lloyd D."/>
            <person name="Kenyon E."/>
            <person name="Donaldson S."/>
            <person name="Sehra H."/>
            <person name="Almeida-King J."/>
            <person name="Loveland J."/>
            <person name="Trevanion S."/>
            <person name="Jones M."/>
            <person name="Quail M."/>
            <person name="Willey D."/>
            <person name="Hunt A."/>
            <person name="Burton J."/>
            <person name="Sims S."/>
            <person name="McLay K."/>
            <person name="Plumb B."/>
            <person name="Davis J."/>
            <person name="Clee C."/>
            <person name="Oliver K."/>
            <person name="Clark R."/>
            <person name="Riddle C."/>
            <person name="Elliot D."/>
            <person name="Threadgold G."/>
            <person name="Harden G."/>
            <person name="Ware D."/>
            <person name="Begum S."/>
            <person name="Mortimore B."/>
            <person name="Kerry G."/>
            <person name="Heath P."/>
            <person name="Phillimore B."/>
            <person name="Tracey A."/>
            <person name="Corby N."/>
            <person name="Dunn M."/>
            <person name="Johnson C."/>
            <person name="Wood J."/>
            <person name="Clark S."/>
            <person name="Pelan S."/>
            <person name="Griffiths G."/>
            <person name="Smith M."/>
            <person name="Glithero R."/>
            <person name="Howden P."/>
            <person name="Barker N."/>
            <person name="Lloyd C."/>
            <person name="Stevens C."/>
            <person name="Harley J."/>
            <person name="Holt K."/>
            <person name="Panagiotidis G."/>
            <person name="Lovell J."/>
            <person name="Beasley H."/>
            <person name="Henderson C."/>
            <person name="Gordon D."/>
            <person name="Auger K."/>
            <person name="Wright D."/>
            <person name="Collins J."/>
            <person name="Raisen C."/>
            <person name="Dyer L."/>
            <person name="Leung K."/>
            <person name="Robertson L."/>
            <person name="Ambridge K."/>
            <person name="Leongamornlert D."/>
            <person name="McGuire S."/>
            <person name="Gilderthorp R."/>
            <person name="Griffiths C."/>
            <person name="Manthravadi D."/>
            <person name="Nichol S."/>
            <person name="Barker G."/>
            <person name="Whitehead S."/>
            <person name="Kay M."/>
            <person name="Brown J."/>
            <person name="Murnane C."/>
            <person name="Gray E."/>
            <person name="Humphries M."/>
            <person name="Sycamore N."/>
            <person name="Barker D."/>
            <person name="Saunders D."/>
            <person name="Wallis J."/>
            <person name="Babbage A."/>
            <person name="Hammond S."/>
            <person name="Mashreghi-Mohammadi M."/>
            <person name="Barr L."/>
            <person name="Martin S."/>
            <person name="Wray P."/>
            <person name="Ellington A."/>
            <person name="Matthews N."/>
            <person name="Ellwood M."/>
            <person name="Woodmansey R."/>
            <person name="Clark G."/>
            <person name="Cooper J."/>
            <person name="Tromans A."/>
            <person name="Grafham D."/>
            <person name="Skuce C."/>
            <person name="Pandian R."/>
            <person name="Andrews R."/>
            <person name="Harrison E."/>
            <person name="Kimberley A."/>
            <person name="Garnett J."/>
            <person name="Fosker N."/>
            <person name="Hall R."/>
            <person name="Garner P."/>
            <person name="Kelly D."/>
            <person name="Bird C."/>
            <person name="Palmer S."/>
            <person name="Gehring I."/>
            <person name="Berger A."/>
            <person name="Dooley C.M."/>
            <person name="Ersan-Urun Z."/>
            <person name="Eser C."/>
            <person name="Geiger H."/>
            <person name="Geisler M."/>
            <person name="Karotki L."/>
            <person name="Kirn A."/>
            <person name="Konantz J."/>
            <person name="Konantz M."/>
            <person name="Oberlander M."/>
            <person name="Rudolph-Geiger S."/>
            <person name="Teucke M."/>
            <person name="Lanz C."/>
            <person name="Raddatz G."/>
            <person name="Osoegawa K."/>
            <person name="Zhu B."/>
            <person name="Rapp A."/>
            <person name="Widaa S."/>
            <person name="Langford C."/>
            <person name="Yang F."/>
            <person name="Schuster S.C."/>
            <person name="Carter N.P."/>
            <person name="Harrow J."/>
            <person name="Ning Z."/>
            <person name="Herrero J."/>
            <person name="Searle S.M."/>
            <person name="Enright A."/>
            <person name="Geisler R."/>
            <person name="Plasterk R.H."/>
            <person name="Lee C."/>
            <person name="Westerfield M."/>
            <person name="de Jong P.J."/>
            <person name="Zon L.I."/>
            <person name="Postlethwait J.H."/>
            <person name="Nusslein-Volhard C."/>
            <person name="Hubbard T.J."/>
            <person name="Roest Crollius H."/>
            <person name="Rogers J."/>
            <person name="Stemple D.L."/>
        </authorList>
    </citation>
    <scope>NUCLEOTIDE SEQUENCE [LARGE SCALE GENOMIC DNA]</scope>
    <source>
        <strain>Tuebingen</strain>
    </source>
</reference>
<reference key="2">
    <citation type="submission" date="2004-07" db="EMBL/GenBank/DDBJ databases">
        <authorList>
            <consortium name="NIH - Zebrafish Gene Collection (ZGC) project"/>
        </authorList>
    </citation>
    <scope>NUCLEOTIDE SEQUENCE [LARGE SCALE MRNA]</scope>
</reference>
<feature type="chain" id="PRO_0000291575" description="Glycerol-3-phosphate acyltransferase 3">
    <location>
        <begin position="1"/>
        <end position="449"/>
    </location>
</feature>
<feature type="transmembrane region" description="Helical" evidence="3">
    <location>
        <begin position="9"/>
        <end position="29"/>
    </location>
</feature>
<feature type="transmembrane region" description="Helical" evidence="3">
    <location>
        <begin position="146"/>
        <end position="166"/>
    </location>
</feature>
<feature type="transmembrane region" description="Helical" evidence="3">
    <location>
        <begin position="170"/>
        <end position="190"/>
    </location>
</feature>
<feature type="transmembrane region" description="Helical" evidence="3">
    <location>
        <begin position="358"/>
        <end position="378"/>
    </location>
</feature>
<feature type="short sequence motif" description="HXXXXD motif" evidence="2">
    <location>
        <begin position="238"/>
        <end position="243"/>
    </location>
</feature>
<protein>
    <recommendedName>
        <fullName evidence="1">Glycerol-3-phosphate acyltransferase 3</fullName>
        <shortName>GPAT-3</shortName>
        <ecNumber evidence="1">2.3.1.15</ecNumber>
    </recommendedName>
    <alternativeName>
        <fullName evidence="1">1-acyl-sn-glycerol-3-phosphate O-acyltransferase 10</fullName>
        <shortName evidence="1">AGPAT 10</shortName>
    </alternativeName>
    <alternativeName>
        <fullName>1-acyl-sn-glycerol-3-phosphate O-acyltransferase 9</fullName>
        <shortName>1-AGP acyltransferase 9</shortName>
        <shortName>1-AGPAT 9</shortName>
        <ecNumber evidence="1">2.3.1.51</ecNumber>
    </alternativeName>
    <alternativeName>
        <fullName>Lysophosphatidic acid acyltransferase theta</fullName>
        <shortName>LPAAT-theta</shortName>
    </alternativeName>
</protein>
<name>GPAT3_DANRE</name>
<sequence>MEGAWDVAFVLLHVWMSIVAGLIVLPAMFGVSLGFTDIYIKLLVKTLEWATLRIQRGQKEQPTLPLQLANGIIEKDDGSMEEEIVELRRSHPKNLAEGNFTLCDAFYFCKKGIENIVEDQVTQRFSSEELASWNLLTRTNNNFRYISVRLTIIWGLGVFVRYCVLLPLRITLAVIGLSWLVIGTTLVGFLPNSKVKNWLSDLVHITCYRICARGLSATIRYHNKENRPKKGGICVANHTSPIDIVILANDGCYAMVGQVHGGLMGVIQRSMVRSCPHVWFERSEMKDRHAVAKRLKDHISDKTKLPILIFPEGTCINNTSVMMFKKGSFEFGGTIYPVAIKYDPRFGDAFWNSAKYNMVSYILRMMTSWAIVCNVWYLPPMTQQDGEDAVHFANRVKSAIAHQGGLVDLSWDGGLKRSKVKESFKEEQQKMYSSMIVGLDSHEATVGPA</sequence>
<accession>Q6DG38</accession>
<accession>Q1LVP5</accession>